<name>PRS27_MOUSE</name>
<proteinExistence type="evidence at transcript level"/>
<evidence type="ECO:0000250" key="1"/>
<evidence type="ECO:0000255" key="2"/>
<evidence type="ECO:0000255" key="3">
    <source>
        <dbReference type="PROSITE-ProRule" id="PRU00274"/>
    </source>
</evidence>
<sequence>MRQPHIAALLLLPLLLRSGTEGARTLRACGHPKMFNRMVGGENALEGEWPWQVSIQRNGIHFCGGSLIAPTWVLTAAHCFSNTSDISIYQVLLGALKLQQPGPHALYVPVKQVKSNPQYQGMASSADVALVELQGPVTFTNYILPVCLPDPSVIFESGMNCWVTGWGSPSEQDRLPNPRVLQKLAVPIIDTPKCNLLYNKDVESDFQLKTIKDDMLCAGFAEGKKDACKGDSGGPLVCLVDQSWVQAGVISWGEGCARRNRPGVYIRVTSHHKWIHQIIPELQFQGRAGTQQQQKDSQGQQRLAGNSAPCLAAHAMVLALGALLLRIV</sequence>
<accession>Q8BJR6</accession>
<accession>Q14A25</accession>
<gene>
    <name type="primary">Prss27</name>
    <name type="synonym">Mpn</name>
</gene>
<keyword id="KW-1015">Disulfide bond</keyword>
<keyword id="KW-0325">Glycoprotein</keyword>
<keyword id="KW-0378">Hydrolase</keyword>
<keyword id="KW-0645">Protease</keyword>
<keyword id="KW-1185">Reference proteome</keyword>
<keyword id="KW-0964">Secreted</keyword>
<keyword id="KW-0720">Serine protease</keyword>
<keyword id="KW-0732">Signal</keyword>
<keyword id="KW-0865">Zymogen</keyword>
<organism>
    <name type="scientific">Mus musculus</name>
    <name type="common">Mouse</name>
    <dbReference type="NCBI Taxonomy" id="10090"/>
    <lineage>
        <taxon>Eukaryota</taxon>
        <taxon>Metazoa</taxon>
        <taxon>Chordata</taxon>
        <taxon>Craniata</taxon>
        <taxon>Vertebrata</taxon>
        <taxon>Euteleostomi</taxon>
        <taxon>Mammalia</taxon>
        <taxon>Eutheria</taxon>
        <taxon>Euarchontoglires</taxon>
        <taxon>Glires</taxon>
        <taxon>Rodentia</taxon>
        <taxon>Myomorpha</taxon>
        <taxon>Muroidea</taxon>
        <taxon>Muridae</taxon>
        <taxon>Murinae</taxon>
        <taxon>Mus</taxon>
        <taxon>Mus</taxon>
    </lineage>
</organism>
<protein>
    <recommendedName>
        <fullName>Serine protease 27</fullName>
        <ecNumber>3.4.21.-</ecNumber>
    </recommendedName>
    <alternativeName>
        <fullName>Marapsin</fullName>
    </alternativeName>
    <alternativeName>
        <fullName>Pancreasin</fullName>
    </alternativeName>
</protein>
<feature type="signal peptide" evidence="2">
    <location>
        <begin position="1"/>
        <end position="22"/>
    </location>
</feature>
<feature type="propeptide" id="PRO_0000027508" description="Activation peptide" evidence="2">
    <location>
        <begin position="23"/>
        <end position="37"/>
    </location>
</feature>
<feature type="chain" id="PRO_0000027509" description="Serine protease 27">
    <location>
        <begin position="38"/>
        <end position="328"/>
    </location>
</feature>
<feature type="domain" description="Peptidase S1" evidence="3">
    <location>
        <begin position="38"/>
        <end position="280"/>
    </location>
</feature>
<feature type="active site" description="Charge relay system" evidence="1">
    <location>
        <position position="78"/>
    </location>
</feature>
<feature type="active site" description="Charge relay system" evidence="1">
    <location>
        <position position="127"/>
    </location>
</feature>
<feature type="active site" description="Charge relay system" evidence="1">
    <location>
        <position position="232"/>
    </location>
</feature>
<feature type="glycosylation site" description="N-linked (GlcNAc...) asparagine" evidence="2">
    <location>
        <position position="82"/>
    </location>
</feature>
<feature type="disulfide bond" evidence="3">
    <location>
        <begin position="63"/>
        <end position="79"/>
    </location>
</feature>
<feature type="disulfide bond" evidence="3">
    <location>
        <begin position="161"/>
        <end position="238"/>
    </location>
</feature>
<feature type="disulfide bond" evidence="3">
    <location>
        <begin position="194"/>
        <end position="217"/>
    </location>
</feature>
<feature type="disulfide bond" evidence="3">
    <location>
        <begin position="228"/>
        <end position="256"/>
    </location>
</feature>
<reference key="1">
    <citation type="journal article" date="2003" name="J. Biol. Chem.">
        <title>Structure and activity of human pancreasin, a novel tryptic serine peptidase expressed primarily by the pancreas.</title>
        <authorList>
            <person name="Bhagwandin V.J."/>
            <person name="Hau L.W.-T."/>
            <person name="Mallen-St Clair J."/>
            <person name="Wolters P.J."/>
            <person name="Caughey G.H."/>
        </authorList>
    </citation>
    <scope>NUCLEOTIDE SEQUENCE [MRNA]</scope>
    <source>
        <strain>C57BL/6J</strain>
        <tissue>Urinary bladder</tissue>
    </source>
</reference>
<reference key="2">
    <citation type="journal article" date="2005" name="Science">
        <title>The transcriptional landscape of the mammalian genome.</title>
        <authorList>
            <person name="Carninci P."/>
            <person name="Kasukawa T."/>
            <person name="Katayama S."/>
            <person name="Gough J."/>
            <person name="Frith M.C."/>
            <person name="Maeda N."/>
            <person name="Oyama R."/>
            <person name="Ravasi T."/>
            <person name="Lenhard B."/>
            <person name="Wells C."/>
            <person name="Kodzius R."/>
            <person name="Shimokawa K."/>
            <person name="Bajic V.B."/>
            <person name="Brenner S.E."/>
            <person name="Batalov S."/>
            <person name="Forrest A.R."/>
            <person name="Zavolan M."/>
            <person name="Davis M.J."/>
            <person name="Wilming L.G."/>
            <person name="Aidinis V."/>
            <person name="Allen J.E."/>
            <person name="Ambesi-Impiombato A."/>
            <person name="Apweiler R."/>
            <person name="Aturaliya R.N."/>
            <person name="Bailey T.L."/>
            <person name="Bansal M."/>
            <person name="Baxter L."/>
            <person name="Beisel K.W."/>
            <person name="Bersano T."/>
            <person name="Bono H."/>
            <person name="Chalk A.M."/>
            <person name="Chiu K.P."/>
            <person name="Choudhary V."/>
            <person name="Christoffels A."/>
            <person name="Clutterbuck D.R."/>
            <person name="Crowe M.L."/>
            <person name="Dalla E."/>
            <person name="Dalrymple B.P."/>
            <person name="de Bono B."/>
            <person name="Della Gatta G."/>
            <person name="di Bernardo D."/>
            <person name="Down T."/>
            <person name="Engstrom P."/>
            <person name="Fagiolini M."/>
            <person name="Faulkner G."/>
            <person name="Fletcher C.F."/>
            <person name="Fukushima T."/>
            <person name="Furuno M."/>
            <person name="Futaki S."/>
            <person name="Gariboldi M."/>
            <person name="Georgii-Hemming P."/>
            <person name="Gingeras T.R."/>
            <person name="Gojobori T."/>
            <person name="Green R.E."/>
            <person name="Gustincich S."/>
            <person name="Harbers M."/>
            <person name="Hayashi Y."/>
            <person name="Hensch T.K."/>
            <person name="Hirokawa N."/>
            <person name="Hill D."/>
            <person name="Huminiecki L."/>
            <person name="Iacono M."/>
            <person name="Ikeo K."/>
            <person name="Iwama A."/>
            <person name="Ishikawa T."/>
            <person name="Jakt M."/>
            <person name="Kanapin A."/>
            <person name="Katoh M."/>
            <person name="Kawasawa Y."/>
            <person name="Kelso J."/>
            <person name="Kitamura H."/>
            <person name="Kitano H."/>
            <person name="Kollias G."/>
            <person name="Krishnan S.P."/>
            <person name="Kruger A."/>
            <person name="Kummerfeld S.K."/>
            <person name="Kurochkin I.V."/>
            <person name="Lareau L.F."/>
            <person name="Lazarevic D."/>
            <person name="Lipovich L."/>
            <person name="Liu J."/>
            <person name="Liuni S."/>
            <person name="McWilliam S."/>
            <person name="Madan Babu M."/>
            <person name="Madera M."/>
            <person name="Marchionni L."/>
            <person name="Matsuda H."/>
            <person name="Matsuzawa S."/>
            <person name="Miki H."/>
            <person name="Mignone F."/>
            <person name="Miyake S."/>
            <person name="Morris K."/>
            <person name="Mottagui-Tabar S."/>
            <person name="Mulder N."/>
            <person name="Nakano N."/>
            <person name="Nakauchi H."/>
            <person name="Ng P."/>
            <person name="Nilsson R."/>
            <person name="Nishiguchi S."/>
            <person name="Nishikawa S."/>
            <person name="Nori F."/>
            <person name="Ohara O."/>
            <person name="Okazaki Y."/>
            <person name="Orlando V."/>
            <person name="Pang K.C."/>
            <person name="Pavan W.J."/>
            <person name="Pavesi G."/>
            <person name="Pesole G."/>
            <person name="Petrovsky N."/>
            <person name="Piazza S."/>
            <person name="Reed J."/>
            <person name="Reid J.F."/>
            <person name="Ring B.Z."/>
            <person name="Ringwald M."/>
            <person name="Rost B."/>
            <person name="Ruan Y."/>
            <person name="Salzberg S.L."/>
            <person name="Sandelin A."/>
            <person name="Schneider C."/>
            <person name="Schoenbach C."/>
            <person name="Sekiguchi K."/>
            <person name="Semple C.A."/>
            <person name="Seno S."/>
            <person name="Sessa L."/>
            <person name="Sheng Y."/>
            <person name="Shibata Y."/>
            <person name="Shimada H."/>
            <person name="Shimada K."/>
            <person name="Silva D."/>
            <person name="Sinclair B."/>
            <person name="Sperling S."/>
            <person name="Stupka E."/>
            <person name="Sugiura K."/>
            <person name="Sultana R."/>
            <person name="Takenaka Y."/>
            <person name="Taki K."/>
            <person name="Tammoja K."/>
            <person name="Tan S.L."/>
            <person name="Tang S."/>
            <person name="Taylor M.S."/>
            <person name="Tegner J."/>
            <person name="Teichmann S.A."/>
            <person name="Ueda H.R."/>
            <person name="van Nimwegen E."/>
            <person name="Verardo R."/>
            <person name="Wei C.L."/>
            <person name="Yagi K."/>
            <person name="Yamanishi H."/>
            <person name="Zabarovsky E."/>
            <person name="Zhu S."/>
            <person name="Zimmer A."/>
            <person name="Hide W."/>
            <person name="Bult C."/>
            <person name="Grimmond S.M."/>
            <person name="Teasdale R.D."/>
            <person name="Liu E.T."/>
            <person name="Brusic V."/>
            <person name="Quackenbush J."/>
            <person name="Wahlestedt C."/>
            <person name="Mattick J.S."/>
            <person name="Hume D.A."/>
            <person name="Kai C."/>
            <person name="Sasaki D."/>
            <person name="Tomaru Y."/>
            <person name="Fukuda S."/>
            <person name="Kanamori-Katayama M."/>
            <person name="Suzuki M."/>
            <person name="Aoki J."/>
            <person name="Arakawa T."/>
            <person name="Iida J."/>
            <person name="Imamura K."/>
            <person name="Itoh M."/>
            <person name="Kato T."/>
            <person name="Kawaji H."/>
            <person name="Kawagashira N."/>
            <person name="Kawashima T."/>
            <person name="Kojima M."/>
            <person name="Kondo S."/>
            <person name="Konno H."/>
            <person name="Nakano K."/>
            <person name="Ninomiya N."/>
            <person name="Nishio T."/>
            <person name="Okada M."/>
            <person name="Plessy C."/>
            <person name="Shibata K."/>
            <person name="Shiraki T."/>
            <person name="Suzuki S."/>
            <person name="Tagami M."/>
            <person name="Waki K."/>
            <person name="Watahiki A."/>
            <person name="Okamura-Oho Y."/>
            <person name="Suzuki H."/>
            <person name="Kawai J."/>
            <person name="Hayashizaki Y."/>
        </authorList>
    </citation>
    <scope>NUCLEOTIDE SEQUENCE [LARGE SCALE MRNA]</scope>
    <source>
        <strain>C57BL/6J</strain>
        <tissue>Thymus</tissue>
    </source>
</reference>
<reference key="3">
    <citation type="submission" date="2002-10" db="EMBL/GenBank/DDBJ databases">
        <title>Genomic sequence analysis in the mouse T-complex region.</title>
        <authorList>
            <person name="Brathwaite M.E."/>
            <person name="Waeltz P."/>
            <person name="Qian Y."/>
            <person name="Dudekula D."/>
            <person name="Schlessinger D."/>
            <person name="Nagaraja R."/>
        </authorList>
    </citation>
    <scope>NUCLEOTIDE SEQUENCE [LARGE SCALE GENOMIC DNA]</scope>
    <source>
        <strain>129/SvJ</strain>
    </source>
</reference>
<reference key="4">
    <citation type="journal article" date="2004" name="Genome Res.">
        <title>The status, quality, and expansion of the NIH full-length cDNA project: the Mammalian Gene Collection (MGC).</title>
        <authorList>
            <consortium name="The MGC Project Team"/>
        </authorList>
    </citation>
    <scope>NUCLEOTIDE SEQUENCE [LARGE SCALE MRNA]</scope>
    <source>
        <tissue>Thymus</tissue>
    </source>
</reference>
<comment type="subcellular location">
    <subcellularLocation>
        <location evidence="1">Secreted</location>
    </subcellularLocation>
</comment>
<comment type="similarity">
    <text evidence="3">Belongs to the peptidase S1 family.</text>
</comment>
<dbReference type="EC" id="3.4.21.-"/>
<dbReference type="EMBL" id="AF542056">
    <property type="protein sequence ID" value="AAO27572.1"/>
    <property type="molecule type" value="mRNA"/>
</dbReference>
<dbReference type="EMBL" id="AK080281">
    <property type="protein sequence ID" value="BAC37864.1"/>
    <property type="molecule type" value="mRNA"/>
</dbReference>
<dbReference type="EMBL" id="AY162410">
    <property type="protein sequence ID" value="AAO17162.1"/>
    <property type="molecule type" value="Genomic_DNA"/>
</dbReference>
<dbReference type="EMBL" id="BC117009">
    <property type="protein sequence ID" value="AAI17010.1"/>
    <property type="molecule type" value="mRNA"/>
</dbReference>
<dbReference type="EMBL" id="BC117011">
    <property type="protein sequence ID" value="AAI17012.1"/>
    <property type="molecule type" value="mRNA"/>
</dbReference>
<dbReference type="CCDS" id="CCDS28472.1"/>
<dbReference type="RefSeq" id="NP_780649.1">
    <property type="nucleotide sequence ID" value="NM_175440.4"/>
</dbReference>
<dbReference type="SMR" id="Q8BJR6"/>
<dbReference type="BioGRID" id="229404">
    <property type="interactions" value="1"/>
</dbReference>
<dbReference type="FunCoup" id="Q8BJR6">
    <property type="interactions" value="268"/>
</dbReference>
<dbReference type="STRING" id="10090.ENSMUSP00000056483"/>
<dbReference type="MEROPS" id="S01.074"/>
<dbReference type="GlyCosmos" id="Q8BJR6">
    <property type="glycosylation" value="1 site, No reported glycans"/>
</dbReference>
<dbReference type="GlyGen" id="Q8BJR6">
    <property type="glycosylation" value="1 site"/>
</dbReference>
<dbReference type="PhosphoSitePlus" id="Q8BJR6"/>
<dbReference type="PaxDb" id="10090-ENSMUSP00000056483"/>
<dbReference type="ProteomicsDB" id="291898"/>
<dbReference type="Antibodypedia" id="23859">
    <property type="antibodies" value="220 antibodies from 24 providers"/>
</dbReference>
<dbReference type="DNASU" id="213171"/>
<dbReference type="Ensembl" id="ENSMUST00000059482.6">
    <property type="protein sequence ID" value="ENSMUSP00000056483.6"/>
    <property type="gene ID" value="ENSMUSG00000050762.6"/>
</dbReference>
<dbReference type="GeneID" id="213171"/>
<dbReference type="KEGG" id="mmu:213171"/>
<dbReference type="UCSC" id="uc008aug.1">
    <property type="organism name" value="mouse"/>
</dbReference>
<dbReference type="AGR" id="MGI:2450123"/>
<dbReference type="CTD" id="83886"/>
<dbReference type="MGI" id="MGI:2450123">
    <property type="gene designation" value="Prss27"/>
</dbReference>
<dbReference type="VEuPathDB" id="HostDB:ENSMUSG00000050762"/>
<dbReference type="eggNOG" id="KOG3627">
    <property type="taxonomic scope" value="Eukaryota"/>
</dbReference>
<dbReference type="GeneTree" id="ENSGT00940000162015"/>
<dbReference type="HOGENOM" id="CLU_006842_0_4_1"/>
<dbReference type="InParanoid" id="Q8BJR6"/>
<dbReference type="OMA" id="PVCMPDP"/>
<dbReference type="OrthoDB" id="546450at2759"/>
<dbReference type="PhylomeDB" id="Q8BJR6"/>
<dbReference type="TreeFam" id="TF351676"/>
<dbReference type="BioGRID-ORCS" id="213171">
    <property type="hits" value="3 hits in 78 CRISPR screens"/>
</dbReference>
<dbReference type="PRO" id="PR:Q8BJR6"/>
<dbReference type="Proteomes" id="UP000000589">
    <property type="component" value="Chromosome 17"/>
</dbReference>
<dbReference type="RNAct" id="Q8BJR6">
    <property type="molecule type" value="protein"/>
</dbReference>
<dbReference type="Bgee" id="ENSMUSG00000050762">
    <property type="expression patterns" value="Expressed in esophagus and 33 other cell types or tissues"/>
</dbReference>
<dbReference type="GO" id="GO:0005576">
    <property type="term" value="C:extracellular region"/>
    <property type="evidence" value="ECO:0007669"/>
    <property type="project" value="UniProtKB-SubCell"/>
</dbReference>
<dbReference type="GO" id="GO:0005886">
    <property type="term" value="C:plasma membrane"/>
    <property type="evidence" value="ECO:0000314"/>
    <property type="project" value="MGI"/>
</dbReference>
<dbReference type="GO" id="GO:0004252">
    <property type="term" value="F:serine-type endopeptidase activity"/>
    <property type="evidence" value="ECO:0007669"/>
    <property type="project" value="InterPro"/>
</dbReference>
<dbReference type="GO" id="GO:0006508">
    <property type="term" value="P:proteolysis"/>
    <property type="evidence" value="ECO:0007669"/>
    <property type="project" value="UniProtKB-KW"/>
</dbReference>
<dbReference type="CDD" id="cd00190">
    <property type="entry name" value="Tryp_SPc"/>
    <property type="match status" value="1"/>
</dbReference>
<dbReference type="FunFam" id="2.40.10.10:FF:000039">
    <property type="entry name" value="Brain-specific serine protease 4"/>
    <property type="match status" value="1"/>
</dbReference>
<dbReference type="Gene3D" id="2.40.10.10">
    <property type="entry name" value="Trypsin-like serine proteases"/>
    <property type="match status" value="2"/>
</dbReference>
<dbReference type="InterPro" id="IPR009003">
    <property type="entry name" value="Peptidase_S1_PA"/>
</dbReference>
<dbReference type="InterPro" id="IPR043504">
    <property type="entry name" value="Peptidase_S1_PA_chymotrypsin"/>
</dbReference>
<dbReference type="InterPro" id="IPR001314">
    <property type="entry name" value="Peptidase_S1A"/>
</dbReference>
<dbReference type="InterPro" id="IPR001254">
    <property type="entry name" value="Trypsin_dom"/>
</dbReference>
<dbReference type="InterPro" id="IPR018114">
    <property type="entry name" value="TRYPSIN_HIS"/>
</dbReference>
<dbReference type="InterPro" id="IPR033116">
    <property type="entry name" value="TRYPSIN_SER"/>
</dbReference>
<dbReference type="PANTHER" id="PTHR24253:SF119">
    <property type="entry name" value="SERINE PROTEASE 27"/>
    <property type="match status" value="1"/>
</dbReference>
<dbReference type="PANTHER" id="PTHR24253">
    <property type="entry name" value="TRANSMEMBRANE PROTEASE SERINE"/>
    <property type="match status" value="1"/>
</dbReference>
<dbReference type="Pfam" id="PF00089">
    <property type="entry name" value="Trypsin"/>
    <property type="match status" value="1"/>
</dbReference>
<dbReference type="PRINTS" id="PR00722">
    <property type="entry name" value="CHYMOTRYPSIN"/>
</dbReference>
<dbReference type="SMART" id="SM00020">
    <property type="entry name" value="Tryp_SPc"/>
    <property type="match status" value="1"/>
</dbReference>
<dbReference type="SUPFAM" id="SSF50494">
    <property type="entry name" value="Trypsin-like serine proteases"/>
    <property type="match status" value="1"/>
</dbReference>
<dbReference type="PROSITE" id="PS50240">
    <property type="entry name" value="TRYPSIN_DOM"/>
    <property type="match status" value="1"/>
</dbReference>
<dbReference type="PROSITE" id="PS00134">
    <property type="entry name" value="TRYPSIN_HIS"/>
    <property type="match status" value="1"/>
</dbReference>
<dbReference type="PROSITE" id="PS00135">
    <property type="entry name" value="TRYPSIN_SER"/>
    <property type="match status" value="1"/>
</dbReference>